<organism>
    <name type="scientific">Aliivibrio fischeri (strain ATCC 700601 / ES114)</name>
    <name type="common">Vibrio fischeri</name>
    <dbReference type="NCBI Taxonomy" id="312309"/>
    <lineage>
        <taxon>Bacteria</taxon>
        <taxon>Pseudomonadati</taxon>
        <taxon>Pseudomonadota</taxon>
        <taxon>Gammaproteobacteria</taxon>
        <taxon>Vibrionales</taxon>
        <taxon>Vibrionaceae</taxon>
        <taxon>Aliivibrio</taxon>
    </lineage>
</organism>
<comment type="catalytic activity">
    <reaction evidence="1">
        <text>1-(5-phospho-beta-D-ribosyl)-5-[(5-phospho-beta-D-ribosylamino)methylideneamino]imidazole-4-carboxamide = 5-[(5-phospho-1-deoxy-D-ribulos-1-ylimino)methylamino]-1-(5-phospho-beta-D-ribosyl)imidazole-4-carboxamide</text>
        <dbReference type="Rhea" id="RHEA:15469"/>
        <dbReference type="ChEBI" id="CHEBI:58435"/>
        <dbReference type="ChEBI" id="CHEBI:58525"/>
        <dbReference type="EC" id="5.3.1.16"/>
    </reaction>
</comment>
<comment type="pathway">
    <text evidence="1">Amino-acid biosynthesis; L-histidine biosynthesis; L-histidine from 5-phospho-alpha-D-ribose 1-diphosphate: step 4/9.</text>
</comment>
<comment type="subcellular location">
    <subcellularLocation>
        <location evidence="1">Cytoplasm</location>
    </subcellularLocation>
</comment>
<comment type="similarity">
    <text evidence="1">Belongs to the HisA/HisF family.</text>
</comment>
<gene>
    <name evidence="1" type="primary">hisA</name>
    <name type="ordered locus">VF_1017</name>
</gene>
<protein>
    <recommendedName>
        <fullName evidence="1">1-(5-phosphoribosyl)-5-[(5-phosphoribosylamino)methylideneamino] imidazole-4-carboxamide isomerase</fullName>
        <ecNumber evidence="1">5.3.1.16</ecNumber>
    </recommendedName>
    <alternativeName>
        <fullName evidence="1">Phosphoribosylformimino-5-aminoimidazole carboxamide ribotide isomerase</fullName>
    </alternativeName>
</protein>
<proteinExistence type="inferred from homology"/>
<name>HIS4_ALIF1</name>
<keyword id="KW-0028">Amino-acid biosynthesis</keyword>
<keyword id="KW-0963">Cytoplasm</keyword>
<keyword id="KW-0368">Histidine biosynthesis</keyword>
<keyword id="KW-0413">Isomerase</keyword>
<keyword id="KW-1185">Reference proteome</keyword>
<evidence type="ECO:0000255" key="1">
    <source>
        <dbReference type="HAMAP-Rule" id="MF_01014"/>
    </source>
</evidence>
<sequence>MIIPALDLIEGQVVRLFQGDYGQVTEYKVDPAEQFNLYHQAGANWLHLVDLTGAKDTTARQLDLIARLLASTPANIQIGGGVRNEDDVQDLLNAGAQRVVVGSTAVKQPELVKGWMEKYGAEKIVLALDINIDENGTRNVAISGWQEDSGVTIEALLEDYLTVGLKHVLCTDISRDGTLQGSNVELYVDLCKQYPQVQFQSSGGIGSLDDIAALKGSGVAGVIVGRALLDGKFTAEEAFQCWQSE</sequence>
<feature type="chain" id="PRO_0000229093" description="1-(5-phosphoribosyl)-5-[(5-phosphoribosylamino)methylideneamino] imidazole-4-carboxamide isomerase">
    <location>
        <begin position="1"/>
        <end position="245"/>
    </location>
</feature>
<feature type="active site" description="Proton acceptor" evidence="1">
    <location>
        <position position="7"/>
    </location>
</feature>
<feature type="active site" description="Proton donor" evidence="1">
    <location>
        <position position="129"/>
    </location>
</feature>
<dbReference type="EC" id="5.3.1.16" evidence="1"/>
<dbReference type="EMBL" id="CP000020">
    <property type="protein sequence ID" value="AAW85512.1"/>
    <property type="molecule type" value="Genomic_DNA"/>
</dbReference>
<dbReference type="RefSeq" id="WP_011261650.1">
    <property type="nucleotide sequence ID" value="NC_006840.2"/>
</dbReference>
<dbReference type="RefSeq" id="YP_204400.1">
    <property type="nucleotide sequence ID" value="NC_006840.2"/>
</dbReference>
<dbReference type="SMR" id="Q5E634"/>
<dbReference type="STRING" id="312309.VF_1017"/>
<dbReference type="EnsemblBacteria" id="AAW85512">
    <property type="protein sequence ID" value="AAW85512"/>
    <property type="gene ID" value="VF_1017"/>
</dbReference>
<dbReference type="GeneID" id="54163689"/>
<dbReference type="KEGG" id="vfi:VF_1017"/>
<dbReference type="PATRIC" id="fig|312309.11.peg.1017"/>
<dbReference type="eggNOG" id="COG0106">
    <property type="taxonomic scope" value="Bacteria"/>
</dbReference>
<dbReference type="HOGENOM" id="CLU_048577_1_2_6"/>
<dbReference type="OrthoDB" id="9807749at2"/>
<dbReference type="UniPathway" id="UPA00031">
    <property type="reaction ID" value="UER00009"/>
</dbReference>
<dbReference type="Proteomes" id="UP000000537">
    <property type="component" value="Chromosome I"/>
</dbReference>
<dbReference type="GO" id="GO:0005737">
    <property type="term" value="C:cytoplasm"/>
    <property type="evidence" value="ECO:0007669"/>
    <property type="project" value="UniProtKB-SubCell"/>
</dbReference>
<dbReference type="GO" id="GO:0003949">
    <property type="term" value="F:1-(5-phosphoribosyl)-5-[(5-phosphoribosylamino)methylideneamino]imidazole-4-carboxamide isomerase activity"/>
    <property type="evidence" value="ECO:0007669"/>
    <property type="project" value="UniProtKB-UniRule"/>
</dbReference>
<dbReference type="GO" id="GO:0000105">
    <property type="term" value="P:L-histidine biosynthetic process"/>
    <property type="evidence" value="ECO:0007669"/>
    <property type="project" value="UniProtKB-UniRule"/>
</dbReference>
<dbReference type="GO" id="GO:0000162">
    <property type="term" value="P:L-tryptophan biosynthetic process"/>
    <property type="evidence" value="ECO:0007669"/>
    <property type="project" value="TreeGrafter"/>
</dbReference>
<dbReference type="CDD" id="cd04732">
    <property type="entry name" value="HisA"/>
    <property type="match status" value="1"/>
</dbReference>
<dbReference type="FunFam" id="3.20.20.70:FF:000009">
    <property type="entry name" value="1-(5-phosphoribosyl)-5-[(5-phosphoribosylamino)methylideneamino] imidazole-4-carboxamide isomerase"/>
    <property type="match status" value="1"/>
</dbReference>
<dbReference type="Gene3D" id="3.20.20.70">
    <property type="entry name" value="Aldolase class I"/>
    <property type="match status" value="1"/>
</dbReference>
<dbReference type="HAMAP" id="MF_01014">
    <property type="entry name" value="HisA"/>
    <property type="match status" value="1"/>
</dbReference>
<dbReference type="InterPro" id="IPR013785">
    <property type="entry name" value="Aldolase_TIM"/>
</dbReference>
<dbReference type="InterPro" id="IPR006062">
    <property type="entry name" value="His_biosynth"/>
</dbReference>
<dbReference type="InterPro" id="IPR006063">
    <property type="entry name" value="HisA_bact_arch"/>
</dbReference>
<dbReference type="InterPro" id="IPR044524">
    <property type="entry name" value="Isoase_HisA-like"/>
</dbReference>
<dbReference type="InterPro" id="IPR023016">
    <property type="entry name" value="Isoase_HisA-like_bact"/>
</dbReference>
<dbReference type="InterPro" id="IPR011060">
    <property type="entry name" value="RibuloseP-bd_barrel"/>
</dbReference>
<dbReference type="NCBIfam" id="TIGR00007">
    <property type="entry name" value="1-(5-phosphoribosyl)-5-[(5-phosphoribosylamino)methylideneamino]imidazole-4-carboxamide isomerase"/>
    <property type="match status" value="1"/>
</dbReference>
<dbReference type="PANTHER" id="PTHR43090">
    <property type="entry name" value="1-(5-PHOSPHORIBOSYL)-5-[(5-PHOSPHORIBOSYLAMINO)METHYLIDENEAMINO] IMIDAZOLE-4-CARBOXAMIDE ISOMERASE"/>
    <property type="match status" value="1"/>
</dbReference>
<dbReference type="PANTHER" id="PTHR43090:SF2">
    <property type="entry name" value="1-(5-PHOSPHORIBOSYL)-5-[(5-PHOSPHORIBOSYLAMINO)METHYLIDENEAMINO] IMIDAZOLE-4-CARBOXAMIDE ISOMERASE"/>
    <property type="match status" value="1"/>
</dbReference>
<dbReference type="Pfam" id="PF00977">
    <property type="entry name" value="His_biosynth"/>
    <property type="match status" value="1"/>
</dbReference>
<dbReference type="SUPFAM" id="SSF51366">
    <property type="entry name" value="Ribulose-phoshate binding barrel"/>
    <property type="match status" value="1"/>
</dbReference>
<reference key="1">
    <citation type="journal article" date="2005" name="Proc. Natl. Acad. Sci. U.S.A.">
        <title>Complete genome sequence of Vibrio fischeri: a symbiotic bacterium with pathogenic congeners.</title>
        <authorList>
            <person name="Ruby E.G."/>
            <person name="Urbanowski M."/>
            <person name="Campbell J."/>
            <person name="Dunn A."/>
            <person name="Faini M."/>
            <person name="Gunsalus R."/>
            <person name="Lostroh P."/>
            <person name="Lupp C."/>
            <person name="McCann J."/>
            <person name="Millikan D."/>
            <person name="Schaefer A."/>
            <person name="Stabb E."/>
            <person name="Stevens A."/>
            <person name="Visick K."/>
            <person name="Whistler C."/>
            <person name="Greenberg E.P."/>
        </authorList>
    </citation>
    <scope>NUCLEOTIDE SEQUENCE [LARGE SCALE GENOMIC DNA]</scope>
    <source>
        <strain>ATCC 700601 / ES114</strain>
    </source>
</reference>
<accession>Q5E634</accession>